<dbReference type="EMBL" id="L77117">
    <property type="protein sequence ID" value="AAB98831.1"/>
    <property type="molecule type" value="Genomic_DNA"/>
</dbReference>
<dbReference type="PIR" id="C64402">
    <property type="entry name" value="C64402"/>
</dbReference>
<dbReference type="SMR" id="Q58229"/>
<dbReference type="STRING" id="243232.MJ_0819"/>
<dbReference type="PaxDb" id="243232-MJ_0819"/>
<dbReference type="EnsemblBacteria" id="AAB98831">
    <property type="protein sequence ID" value="AAB98831"/>
    <property type="gene ID" value="MJ_0819"/>
</dbReference>
<dbReference type="KEGG" id="mja:MJ_0819"/>
<dbReference type="eggNOG" id="arCOG03407">
    <property type="taxonomic scope" value="Archaea"/>
</dbReference>
<dbReference type="HOGENOM" id="CLU_2177888_0_0_2"/>
<dbReference type="InParanoid" id="Q58229"/>
<dbReference type="Proteomes" id="UP000000805">
    <property type="component" value="Chromosome"/>
</dbReference>
<dbReference type="Gene3D" id="1.10.10.10">
    <property type="entry name" value="Winged helix-like DNA-binding domain superfamily/Winged helix DNA-binding domain"/>
    <property type="match status" value="1"/>
</dbReference>
<dbReference type="InterPro" id="IPR049081">
    <property type="entry name" value="MJ1010-like_2nd"/>
</dbReference>
<dbReference type="InterPro" id="IPR036388">
    <property type="entry name" value="WH-like_DNA-bd_sf"/>
</dbReference>
<dbReference type="Pfam" id="PF21690">
    <property type="entry name" value="MJ1010-like_2nd"/>
    <property type="match status" value="1"/>
</dbReference>
<proteinExistence type="uncertain"/>
<organism>
    <name type="scientific">Methanocaldococcus jannaschii (strain ATCC 43067 / DSM 2661 / JAL-1 / JCM 10045 / NBRC 100440)</name>
    <name type="common">Methanococcus jannaschii</name>
    <dbReference type="NCBI Taxonomy" id="243232"/>
    <lineage>
        <taxon>Archaea</taxon>
        <taxon>Methanobacteriati</taxon>
        <taxon>Methanobacteriota</taxon>
        <taxon>Methanomada group</taxon>
        <taxon>Methanococci</taxon>
        <taxon>Methanococcales</taxon>
        <taxon>Methanocaldococcaceae</taxon>
        <taxon>Methanocaldococcus</taxon>
    </lineage>
</organism>
<reference key="1">
    <citation type="journal article" date="1996" name="Science">
        <title>Complete genome sequence of the methanogenic archaeon, Methanococcus jannaschii.</title>
        <authorList>
            <person name="Bult C.J."/>
            <person name="White O."/>
            <person name="Olsen G.J."/>
            <person name="Zhou L."/>
            <person name="Fleischmann R.D."/>
            <person name="Sutton G.G."/>
            <person name="Blake J.A."/>
            <person name="FitzGerald L.M."/>
            <person name="Clayton R.A."/>
            <person name="Gocayne J.D."/>
            <person name="Kerlavage A.R."/>
            <person name="Dougherty B.A."/>
            <person name="Tomb J.-F."/>
            <person name="Adams M.D."/>
            <person name="Reich C.I."/>
            <person name="Overbeek R."/>
            <person name="Kirkness E.F."/>
            <person name="Weinstock K.G."/>
            <person name="Merrick J.M."/>
            <person name="Glodek A."/>
            <person name="Scott J.L."/>
            <person name="Geoghagen N.S.M."/>
            <person name="Weidman J.F."/>
            <person name="Fuhrmann J.L."/>
            <person name="Nguyen D."/>
            <person name="Utterback T.R."/>
            <person name="Kelley J.M."/>
            <person name="Peterson J.D."/>
            <person name="Sadow P.W."/>
            <person name="Hanna M.C."/>
            <person name="Cotton M.D."/>
            <person name="Roberts K.M."/>
            <person name="Hurst M.A."/>
            <person name="Kaine B.P."/>
            <person name="Borodovsky M."/>
            <person name="Klenk H.-P."/>
            <person name="Fraser C.M."/>
            <person name="Smith H.O."/>
            <person name="Woese C.R."/>
            <person name="Venter J.C."/>
        </authorList>
    </citation>
    <scope>NUCLEOTIDE SEQUENCE [LARGE SCALE GENOMIC DNA]</scope>
    <source>
        <strain>ATCC 43067 / DSM 2661 / JAL-1 / JCM 10045 / NBRC 100440</strain>
    </source>
</reference>
<reference key="2">
    <citation type="journal article" date="1997" name="Science">
        <title>Evidence for a family of archaeal ATPases.</title>
        <authorList>
            <person name="Koonin E.V."/>
        </authorList>
    </citation>
    <scope>SIMILARITY</scope>
</reference>
<gene>
    <name type="ordered locus">MJ0819</name>
</gene>
<keyword id="KW-1185">Reference proteome</keyword>
<evidence type="ECO:0000305" key="1"/>
<sequence>MLVGSQLIEIVIDSLRYENLKEILDEMFRDEVQKLKYFLEDVKEEDEELYNKIVDALKLFKENYEIEDIKIPKKIRVFLVKNNILFLNPQKGSLKPQSYLVWNAIKMLL</sequence>
<accession>Q58229</accession>
<protein>
    <recommendedName>
        <fullName>Putative uncharacterized protein MJ0819</fullName>
    </recommendedName>
</protein>
<name>Y819_METJA</name>
<feature type="chain" id="PRO_0000184681" description="Putative uncharacterized protein MJ0819">
    <location>
        <begin position="1"/>
        <end position="109"/>
    </location>
</feature>
<comment type="similarity">
    <text evidence="1">Belongs to the archaeal ATPase family.</text>
</comment>
<comment type="caution">
    <text evidence="1">Could be the product of a pseudogene. MJ0821, MJ0820 and MJ0819 respectively represent the N-terminal, central and C-terminal sections of other members of this family.</text>
</comment>